<reference key="1">
    <citation type="journal article" date="2006" name="J. Bacteriol.">
        <title>Genome sequence of Aeromonas hydrophila ATCC 7966T: jack of all trades.</title>
        <authorList>
            <person name="Seshadri R."/>
            <person name="Joseph S.W."/>
            <person name="Chopra A.K."/>
            <person name="Sha J."/>
            <person name="Shaw J."/>
            <person name="Graf J."/>
            <person name="Haft D.H."/>
            <person name="Wu M."/>
            <person name="Ren Q."/>
            <person name="Rosovitz M.J."/>
            <person name="Madupu R."/>
            <person name="Tallon L."/>
            <person name="Kim M."/>
            <person name="Jin S."/>
            <person name="Vuong H."/>
            <person name="Stine O.C."/>
            <person name="Ali A."/>
            <person name="Horneman A.J."/>
            <person name="Heidelberg J.F."/>
        </authorList>
    </citation>
    <scope>NUCLEOTIDE SEQUENCE [LARGE SCALE GENOMIC DNA]</scope>
    <source>
        <strain>ATCC 7966 / DSM 30187 / BCRC 13018 / CCUG 14551 / JCM 1027 / KCTC 2358 / NCIMB 9240 / NCTC 8049</strain>
    </source>
</reference>
<evidence type="ECO:0000255" key="1">
    <source>
        <dbReference type="HAMAP-Rule" id="MF_00652"/>
    </source>
</evidence>
<name>Y3667_AERHH</name>
<feature type="chain" id="PRO_1000061583" description="UPF0246 protein AHA_3667">
    <location>
        <begin position="1"/>
        <end position="257"/>
    </location>
</feature>
<gene>
    <name type="ordered locus">AHA_3667</name>
</gene>
<protein>
    <recommendedName>
        <fullName evidence="1">UPF0246 protein AHA_3667</fullName>
    </recommendedName>
</protein>
<accession>A0KPC2</accession>
<dbReference type="EMBL" id="CP000462">
    <property type="protein sequence ID" value="ABK39449.1"/>
    <property type="molecule type" value="Genomic_DNA"/>
</dbReference>
<dbReference type="RefSeq" id="YP_858123.1">
    <property type="nucleotide sequence ID" value="NC_008570.1"/>
</dbReference>
<dbReference type="SMR" id="A0KPC2"/>
<dbReference type="STRING" id="380703.AHA_3667"/>
<dbReference type="EnsemblBacteria" id="ABK39449">
    <property type="protein sequence ID" value="ABK39449"/>
    <property type="gene ID" value="AHA_3667"/>
</dbReference>
<dbReference type="GeneID" id="4487749"/>
<dbReference type="KEGG" id="aha:AHA_3667"/>
<dbReference type="PATRIC" id="fig|380703.7.peg.3643"/>
<dbReference type="eggNOG" id="COG3022">
    <property type="taxonomic scope" value="Bacteria"/>
</dbReference>
<dbReference type="HOGENOM" id="CLU_061989_0_0_6"/>
<dbReference type="OrthoDB" id="9777133at2"/>
<dbReference type="Proteomes" id="UP000000756">
    <property type="component" value="Chromosome"/>
</dbReference>
<dbReference type="GO" id="GO:0005829">
    <property type="term" value="C:cytosol"/>
    <property type="evidence" value="ECO:0007669"/>
    <property type="project" value="TreeGrafter"/>
</dbReference>
<dbReference type="GO" id="GO:0033194">
    <property type="term" value="P:response to hydroperoxide"/>
    <property type="evidence" value="ECO:0007669"/>
    <property type="project" value="TreeGrafter"/>
</dbReference>
<dbReference type="HAMAP" id="MF_00652">
    <property type="entry name" value="UPF0246"/>
    <property type="match status" value="1"/>
</dbReference>
<dbReference type="InterPro" id="IPR005583">
    <property type="entry name" value="YaaA"/>
</dbReference>
<dbReference type="NCBIfam" id="NF002541">
    <property type="entry name" value="PRK02101.1-1"/>
    <property type="match status" value="1"/>
</dbReference>
<dbReference type="NCBIfam" id="NF002542">
    <property type="entry name" value="PRK02101.1-3"/>
    <property type="match status" value="1"/>
</dbReference>
<dbReference type="PANTHER" id="PTHR30283:SF4">
    <property type="entry name" value="PEROXIDE STRESS RESISTANCE PROTEIN YAAA"/>
    <property type="match status" value="1"/>
</dbReference>
<dbReference type="PANTHER" id="PTHR30283">
    <property type="entry name" value="PEROXIDE STRESS RESPONSE PROTEIN YAAA"/>
    <property type="match status" value="1"/>
</dbReference>
<dbReference type="Pfam" id="PF03883">
    <property type="entry name" value="H2O2_YaaD"/>
    <property type="match status" value="1"/>
</dbReference>
<sequence length="257" mass="28894">MLIVVSPAKTLDYESPLVTSRFTQPELLDHSAELIGRARQLSPDQIASLMKISDKLAGLNAARFADWQPDFSPANARQALLAFKGDVYTGLAVEDFSEADLDFAQAHLRMLSGLYGVLRPLDLMMPYRLEMGIRLDNGRGKDLYQFWGDIITAHLNKALAAQGDEVLINLASDEYFKSVRPKALQGRIITPVFKDEKNGQFKIISFYAKKARGMMARHIIKHRLTKVEQLTGFNADGYYFVAEESDANTLMFKRAEN</sequence>
<keyword id="KW-1185">Reference proteome</keyword>
<proteinExistence type="inferred from homology"/>
<comment type="similarity">
    <text evidence="1">Belongs to the UPF0246 family.</text>
</comment>
<organism>
    <name type="scientific">Aeromonas hydrophila subsp. hydrophila (strain ATCC 7966 / DSM 30187 / BCRC 13018 / CCUG 14551 / JCM 1027 / KCTC 2358 / NCIMB 9240 / NCTC 8049)</name>
    <dbReference type="NCBI Taxonomy" id="380703"/>
    <lineage>
        <taxon>Bacteria</taxon>
        <taxon>Pseudomonadati</taxon>
        <taxon>Pseudomonadota</taxon>
        <taxon>Gammaproteobacteria</taxon>
        <taxon>Aeromonadales</taxon>
        <taxon>Aeromonadaceae</taxon>
        <taxon>Aeromonas</taxon>
    </lineage>
</organism>